<dbReference type="EC" id="6.3.2.13" evidence="1"/>
<dbReference type="EMBL" id="AL590842">
    <property type="protein sequence ID" value="CAL19229.1"/>
    <property type="molecule type" value="Genomic_DNA"/>
</dbReference>
<dbReference type="EMBL" id="AE009952">
    <property type="protein sequence ID" value="AAM87179.1"/>
    <property type="status" value="ALT_INIT"/>
    <property type="molecule type" value="Genomic_DNA"/>
</dbReference>
<dbReference type="EMBL" id="AE017042">
    <property type="protein sequence ID" value="AAS63782.1"/>
    <property type="status" value="ALT_INIT"/>
    <property type="molecule type" value="Genomic_DNA"/>
</dbReference>
<dbReference type="PIR" id="AC0068">
    <property type="entry name" value="AC0068"/>
</dbReference>
<dbReference type="RefSeq" id="YP_002345621.1">
    <property type="nucleotide sequence ID" value="NC_003143.1"/>
</dbReference>
<dbReference type="SMR" id="Q8ZIF4"/>
<dbReference type="STRING" id="214092.YPO0550"/>
<dbReference type="PaxDb" id="214092-YPO0550"/>
<dbReference type="DNASU" id="1148578"/>
<dbReference type="EnsemblBacteria" id="AAS63782">
    <property type="protein sequence ID" value="AAS63782"/>
    <property type="gene ID" value="YP_3634"/>
</dbReference>
<dbReference type="KEGG" id="ype:YPO0550"/>
<dbReference type="KEGG" id="ypk:y3631"/>
<dbReference type="KEGG" id="ypm:YP_3634"/>
<dbReference type="PATRIC" id="fig|214092.21.peg.803"/>
<dbReference type="eggNOG" id="COG0769">
    <property type="taxonomic scope" value="Bacteria"/>
</dbReference>
<dbReference type="HOGENOM" id="CLU_022291_3_2_6"/>
<dbReference type="OrthoDB" id="9800958at2"/>
<dbReference type="UniPathway" id="UPA00219"/>
<dbReference type="Proteomes" id="UP000000815">
    <property type="component" value="Chromosome"/>
</dbReference>
<dbReference type="Proteomes" id="UP000001019">
    <property type="component" value="Chromosome"/>
</dbReference>
<dbReference type="Proteomes" id="UP000002490">
    <property type="component" value="Chromosome"/>
</dbReference>
<dbReference type="GO" id="GO:0005737">
    <property type="term" value="C:cytoplasm"/>
    <property type="evidence" value="ECO:0007669"/>
    <property type="project" value="UniProtKB-SubCell"/>
</dbReference>
<dbReference type="GO" id="GO:0005524">
    <property type="term" value="F:ATP binding"/>
    <property type="evidence" value="ECO:0007669"/>
    <property type="project" value="UniProtKB-UniRule"/>
</dbReference>
<dbReference type="GO" id="GO:0000287">
    <property type="term" value="F:magnesium ion binding"/>
    <property type="evidence" value="ECO:0007669"/>
    <property type="project" value="UniProtKB-UniRule"/>
</dbReference>
<dbReference type="GO" id="GO:0008765">
    <property type="term" value="F:UDP-N-acetylmuramoylalanyl-D-glutamate-2,6-diaminopimelate ligase activity"/>
    <property type="evidence" value="ECO:0007669"/>
    <property type="project" value="UniProtKB-UniRule"/>
</dbReference>
<dbReference type="GO" id="GO:0051301">
    <property type="term" value="P:cell division"/>
    <property type="evidence" value="ECO:0007669"/>
    <property type="project" value="UniProtKB-KW"/>
</dbReference>
<dbReference type="GO" id="GO:0071555">
    <property type="term" value="P:cell wall organization"/>
    <property type="evidence" value="ECO:0007669"/>
    <property type="project" value="UniProtKB-KW"/>
</dbReference>
<dbReference type="GO" id="GO:0009252">
    <property type="term" value="P:peptidoglycan biosynthetic process"/>
    <property type="evidence" value="ECO:0007669"/>
    <property type="project" value="UniProtKB-UniRule"/>
</dbReference>
<dbReference type="GO" id="GO:0008360">
    <property type="term" value="P:regulation of cell shape"/>
    <property type="evidence" value="ECO:0007669"/>
    <property type="project" value="UniProtKB-KW"/>
</dbReference>
<dbReference type="FunFam" id="3.40.1190.10:FF:000006">
    <property type="entry name" value="UDP-N-acetylmuramoyl-L-alanyl-D-glutamate--2,6-diaminopimelate ligase"/>
    <property type="match status" value="1"/>
</dbReference>
<dbReference type="FunFam" id="3.90.190.20:FF:000006">
    <property type="entry name" value="UDP-N-acetylmuramoyl-L-alanyl-D-glutamate--2,6-diaminopimelate ligase"/>
    <property type="match status" value="1"/>
</dbReference>
<dbReference type="Gene3D" id="3.90.190.20">
    <property type="entry name" value="Mur ligase, C-terminal domain"/>
    <property type="match status" value="1"/>
</dbReference>
<dbReference type="Gene3D" id="3.40.1190.10">
    <property type="entry name" value="Mur-like, catalytic domain"/>
    <property type="match status" value="1"/>
</dbReference>
<dbReference type="Gene3D" id="3.40.1390.10">
    <property type="entry name" value="MurE/MurF, N-terminal domain"/>
    <property type="match status" value="1"/>
</dbReference>
<dbReference type="HAMAP" id="MF_00208">
    <property type="entry name" value="MurE"/>
    <property type="match status" value="1"/>
</dbReference>
<dbReference type="InterPro" id="IPR036565">
    <property type="entry name" value="Mur-like_cat_sf"/>
</dbReference>
<dbReference type="InterPro" id="IPR004101">
    <property type="entry name" value="Mur_ligase_C"/>
</dbReference>
<dbReference type="InterPro" id="IPR036615">
    <property type="entry name" value="Mur_ligase_C_dom_sf"/>
</dbReference>
<dbReference type="InterPro" id="IPR013221">
    <property type="entry name" value="Mur_ligase_cen"/>
</dbReference>
<dbReference type="InterPro" id="IPR000713">
    <property type="entry name" value="Mur_ligase_N"/>
</dbReference>
<dbReference type="InterPro" id="IPR035911">
    <property type="entry name" value="MurE/MurF_N"/>
</dbReference>
<dbReference type="InterPro" id="IPR005761">
    <property type="entry name" value="UDP-N-AcMur-Glu-dNH2Pim_ligase"/>
</dbReference>
<dbReference type="NCBIfam" id="TIGR01085">
    <property type="entry name" value="murE"/>
    <property type="match status" value="1"/>
</dbReference>
<dbReference type="NCBIfam" id="NF001123">
    <property type="entry name" value="PRK00139.1-1"/>
    <property type="match status" value="1"/>
</dbReference>
<dbReference type="NCBIfam" id="NF001124">
    <property type="entry name" value="PRK00139.1-2"/>
    <property type="match status" value="1"/>
</dbReference>
<dbReference type="NCBIfam" id="NF001126">
    <property type="entry name" value="PRK00139.1-4"/>
    <property type="match status" value="1"/>
</dbReference>
<dbReference type="PANTHER" id="PTHR23135">
    <property type="entry name" value="MUR LIGASE FAMILY MEMBER"/>
    <property type="match status" value="1"/>
</dbReference>
<dbReference type="PANTHER" id="PTHR23135:SF4">
    <property type="entry name" value="UDP-N-ACETYLMURAMOYL-L-ALANYL-D-GLUTAMATE--2,6-DIAMINOPIMELATE LIGASE MURE HOMOLOG, CHLOROPLASTIC"/>
    <property type="match status" value="1"/>
</dbReference>
<dbReference type="Pfam" id="PF01225">
    <property type="entry name" value="Mur_ligase"/>
    <property type="match status" value="1"/>
</dbReference>
<dbReference type="Pfam" id="PF02875">
    <property type="entry name" value="Mur_ligase_C"/>
    <property type="match status" value="1"/>
</dbReference>
<dbReference type="Pfam" id="PF08245">
    <property type="entry name" value="Mur_ligase_M"/>
    <property type="match status" value="1"/>
</dbReference>
<dbReference type="SUPFAM" id="SSF53623">
    <property type="entry name" value="MurD-like peptide ligases, catalytic domain"/>
    <property type="match status" value="1"/>
</dbReference>
<dbReference type="SUPFAM" id="SSF53244">
    <property type="entry name" value="MurD-like peptide ligases, peptide-binding domain"/>
    <property type="match status" value="1"/>
</dbReference>
<dbReference type="SUPFAM" id="SSF63418">
    <property type="entry name" value="MurE/MurF N-terminal domain"/>
    <property type="match status" value="1"/>
</dbReference>
<keyword id="KW-0067">ATP-binding</keyword>
<keyword id="KW-0131">Cell cycle</keyword>
<keyword id="KW-0132">Cell division</keyword>
<keyword id="KW-0133">Cell shape</keyword>
<keyword id="KW-0961">Cell wall biogenesis/degradation</keyword>
<keyword id="KW-0963">Cytoplasm</keyword>
<keyword id="KW-0436">Ligase</keyword>
<keyword id="KW-0460">Magnesium</keyword>
<keyword id="KW-0547">Nucleotide-binding</keyword>
<keyword id="KW-0573">Peptidoglycan synthesis</keyword>
<keyword id="KW-1185">Reference proteome</keyword>
<gene>
    <name evidence="1" type="primary">murE</name>
    <name type="ordered locus">YPO0550</name>
    <name type="ordered locus">y3631</name>
    <name type="ordered locus">YP_3634</name>
</gene>
<organism>
    <name type="scientific">Yersinia pestis</name>
    <dbReference type="NCBI Taxonomy" id="632"/>
    <lineage>
        <taxon>Bacteria</taxon>
        <taxon>Pseudomonadati</taxon>
        <taxon>Pseudomonadota</taxon>
        <taxon>Gammaproteobacteria</taxon>
        <taxon>Enterobacterales</taxon>
        <taxon>Yersiniaceae</taxon>
        <taxon>Yersinia</taxon>
    </lineage>
</organism>
<accession>Q8ZIF4</accession>
<accession>Q0WJB7</accession>
<name>MURE_YERPE</name>
<evidence type="ECO:0000255" key="1">
    <source>
        <dbReference type="HAMAP-Rule" id="MF_00208"/>
    </source>
</evidence>
<evidence type="ECO:0000305" key="2"/>
<feature type="chain" id="PRO_0000101977" description="UDP-N-acetylmuramoyl-L-alanyl-D-glutamate--2,6-diaminopimelate ligase">
    <location>
        <begin position="1"/>
        <end position="490"/>
    </location>
</feature>
<feature type="short sequence motif" description="Meso-diaminopimelate recognition motif">
    <location>
        <begin position="409"/>
        <end position="412"/>
    </location>
</feature>
<feature type="binding site" evidence="1">
    <location>
        <position position="22"/>
    </location>
    <ligand>
        <name>UDP-N-acetyl-alpha-D-muramoyl-L-alanyl-D-glutamate</name>
        <dbReference type="ChEBI" id="CHEBI:83900"/>
    </ligand>
</feature>
<feature type="binding site" evidence="1">
    <location>
        <position position="24"/>
    </location>
    <ligand>
        <name>UDP-N-acetyl-alpha-D-muramoyl-L-alanyl-D-glutamate</name>
        <dbReference type="ChEBI" id="CHEBI:83900"/>
    </ligand>
</feature>
<feature type="binding site" evidence="1">
    <location>
        <begin position="39"/>
        <end position="41"/>
    </location>
    <ligand>
        <name>UDP-N-acetyl-alpha-D-muramoyl-L-alanyl-D-glutamate</name>
        <dbReference type="ChEBI" id="CHEBI:83900"/>
    </ligand>
</feature>
<feature type="binding site" evidence="1">
    <location>
        <begin position="111"/>
        <end position="117"/>
    </location>
    <ligand>
        <name>ATP</name>
        <dbReference type="ChEBI" id="CHEBI:30616"/>
    </ligand>
</feature>
<feature type="binding site" evidence="1">
    <location>
        <position position="152"/>
    </location>
    <ligand>
        <name>UDP-N-acetyl-alpha-D-muramoyl-L-alanyl-D-glutamate</name>
        <dbReference type="ChEBI" id="CHEBI:83900"/>
    </ligand>
</feature>
<feature type="binding site" evidence="1">
    <location>
        <begin position="153"/>
        <end position="154"/>
    </location>
    <ligand>
        <name>UDP-N-acetyl-alpha-D-muramoyl-L-alanyl-D-glutamate</name>
        <dbReference type="ChEBI" id="CHEBI:83900"/>
    </ligand>
</feature>
<feature type="binding site" evidence="1">
    <location>
        <position position="180"/>
    </location>
    <ligand>
        <name>UDP-N-acetyl-alpha-D-muramoyl-L-alanyl-D-glutamate</name>
        <dbReference type="ChEBI" id="CHEBI:83900"/>
    </ligand>
</feature>
<feature type="binding site" evidence="1">
    <location>
        <position position="186"/>
    </location>
    <ligand>
        <name>UDP-N-acetyl-alpha-D-muramoyl-L-alanyl-D-glutamate</name>
        <dbReference type="ChEBI" id="CHEBI:83900"/>
    </ligand>
</feature>
<feature type="binding site" evidence="1">
    <location>
        <position position="188"/>
    </location>
    <ligand>
        <name>UDP-N-acetyl-alpha-D-muramoyl-L-alanyl-D-glutamate</name>
        <dbReference type="ChEBI" id="CHEBI:83900"/>
    </ligand>
</feature>
<feature type="binding site" evidence="1">
    <location>
        <position position="385"/>
    </location>
    <ligand>
        <name>meso-2,6-diaminopimelate</name>
        <dbReference type="ChEBI" id="CHEBI:57791"/>
    </ligand>
</feature>
<feature type="binding site" evidence="1">
    <location>
        <begin position="409"/>
        <end position="412"/>
    </location>
    <ligand>
        <name>meso-2,6-diaminopimelate</name>
        <dbReference type="ChEBI" id="CHEBI:57791"/>
    </ligand>
</feature>
<feature type="binding site" evidence="1">
    <location>
        <position position="460"/>
    </location>
    <ligand>
        <name>meso-2,6-diaminopimelate</name>
        <dbReference type="ChEBI" id="CHEBI:57791"/>
    </ligand>
</feature>
<feature type="binding site" evidence="1">
    <location>
        <position position="464"/>
    </location>
    <ligand>
        <name>meso-2,6-diaminopimelate</name>
        <dbReference type="ChEBI" id="CHEBI:57791"/>
    </ligand>
</feature>
<feature type="modified residue" description="N6-carboxylysine" evidence="1">
    <location>
        <position position="220"/>
    </location>
</feature>
<protein>
    <recommendedName>
        <fullName evidence="1">UDP-N-acetylmuramoyl-L-alanyl-D-glutamate--2,6-diaminopimelate ligase</fullName>
        <ecNumber evidence="1">6.3.2.13</ecNumber>
    </recommendedName>
    <alternativeName>
        <fullName evidence="1">Meso-A2pm-adding enzyme</fullName>
    </alternativeName>
    <alternativeName>
        <fullName evidence="1">Meso-diaminopimelate-adding enzyme</fullName>
    </alternativeName>
    <alternativeName>
        <fullName evidence="1">UDP-MurNAc-L-Ala-D-Glu:meso-diaminopimelate ligase</fullName>
    </alternativeName>
    <alternativeName>
        <fullName evidence="1">UDP-MurNAc-tripeptide synthetase</fullName>
    </alternativeName>
    <alternativeName>
        <fullName evidence="1">UDP-N-acetylmuramyl-tripeptide synthetase</fullName>
    </alternativeName>
</protein>
<reference key="1">
    <citation type="journal article" date="2001" name="Nature">
        <title>Genome sequence of Yersinia pestis, the causative agent of plague.</title>
        <authorList>
            <person name="Parkhill J."/>
            <person name="Wren B.W."/>
            <person name="Thomson N.R."/>
            <person name="Titball R.W."/>
            <person name="Holden M.T.G."/>
            <person name="Prentice M.B."/>
            <person name="Sebaihia M."/>
            <person name="James K.D."/>
            <person name="Churcher C.M."/>
            <person name="Mungall K.L."/>
            <person name="Baker S."/>
            <person name="Basham D."/>
            <person name="Bentley S.D."/>
            <person name="Brooks K."/>
            <person name="Cerdeno-Tarraga A.-M."/>
            <person name="Chillingworth T."/>
            <person name="Cronin A."/>
            <person name="Davies R.M."/>
            <person name="Davis P."/>
            <person name="Dougan G."/>
            <person name="Feltwell T."/>
            <person name="Hamlin N."/>
            <person name="Holroyd S."/>
            <person name="Jagels K."/>
            <person name="Karlyshev A.V."/>
            <person name="Leather S."/>
            <person name="Moule S."/>
            <person name="Oyston P.C.F."/>
            <person name="Quail M.A."/>
            <person name="Rutherford K.M."/>
            <person name="Simmonds M."/>
            <person name="Skelton J."/>
            <person name="Stevens K."/>
            <person name="Whitehead S."/>
            <person name="Barrell B.G."/>
        </authorList>
    </citation>
    <scope>NUCLEOTIDE SEQUENCE [LARGE SCALE GENOMIC DNA]</scope>
    <source>
        <strain>CO-92 / Biovar Orientalis</strain>
    </source>
</reference>
<reference key="2">
    <citation type="journal article" date="2002" name="J. Bacteriol.">
        <title>Genome sequence of Yersinia pestis KIM.</title>
        <authorList>
            <person name="Deng W."/>
            <person name="Burland V."/>
            <person name="Plunkett G. III"/>
            <person name="Boutin A."/>
            <person name="Mayhew G.F."/>
            <person name="Liss P."/>
            <person name="Perna N.T."/>
            <person name="Rose D.J."/>
            <person name="Mau B."/>
            <person name="Zhou S."/>
            <person name="Schwartz D.C."/>
            <person name="Fetherston J.D."/>
            <person name="Lindler L.E."/>
            <person name="Brubaker R.R."/>
            <person name="Plano G.V."/>
            <person name="Straley S.C."/>
            <person name="McDonough K.A."/>
            <person name="Nilles M.L."/>
            <person name="Matson J.S."/>
            <person name="Blattner F.R."/>
            <person name="Perry R.D."/>
        </authorList>
    </citation>
    <scope>NUCLEOTIDE SEQUENCE [LARGE SCALE GENOMIC DNA]</scope>
    <source>
        <strain>KIM10+ / Biovar Mediaevalis</strain>
    </source>
</reference>
<reference key="3">
    <citation type="journal article" date="2004" name="DNA Res.">
        <title>Complete genome sequence of Yersinia pestis strain 91001, an isolate avirulent to humans.</title>
        <authorList>
            <person name="Song Y."/>
            <person name="Tong Z."/>
            <person name="Wang J."/>
            <person name="Wang L."/>
            <person name="Guo Z."/>
            <person name="Han Y."/>
            <person name="Zhang J."/>
            <person name="Pei D."/>
            <person name="Zhou D."/>
            <person name="Qin H."/>
            <person name="Pang X."/>
            <person name="Han Y."/>
            <person name="Zhai J."/>
            <person name="Li M."/>
            <person name="Cui B."/>
            <person name="Qi Z."/>
            <person name="Jin L."/>
            <person name="Dai R."/>
            <person name="Chen F."/>
            <person name="Li S."/>
            <person name="Ye C."/>
            <person name="Du Z."/>
            <person name="Lin W."/>
            <person name="Wang J."/>
            <person name="Yu J."/>
            <person name="Yang H."/>
            <person name="Wang J."/>
            <person name="Huang P."/>
            <person name="Yang R."/>
        </authorList>
    </citation>
    <scope>NUCLEOTIDE SEQUENCE [LARGE SCALE GENOMIC DNA]</scope>
    <source>
        <strain>91001 / Biovar Mediaevalis</strain>
    </source>
</reference>
<sequence length="490" mass="52235">MRDLFAPWGLDVPERALREMTLDSRIAAAGDLFVAVVGHQTDGRRYIPQAIAQGVAAIVAEADGVAPDVSVAEIHGVPVIYLRNLNQHLSTLAGQFYHQPGAALRLVGVTGTNGKTTTTQLLAQWSQALGETSAVMGTVGNGLLGQVIPTENTTGSAVDIQHLLRNLVDQGATFAAMEVSSHGLIQDRVAALSFAAVVFTNLSRDHLDYHGNMTSYEAAKWLLFSTHQSEHKIINADDDVGRRWLSQLPQAVAVSMAGNVPKGWNGPWLSANKVIYHDNGASIAFDSSWGEGELESRLMGAFNVSNLLVALATLLVQGYPMAQLLAAAPHLQPVCGRMEVFNAPGKPTVVVDYAHTPDALEKALAAARLHCTGKLWCVFGCGGDRDKGKRPLMGGIAEQLADCVVVTDDNPRSEEPQAIVADILSGLLDAGRVQAIHGRAEAVTSAIMQAKEDDVVLIAGKGHEDYQLVGNRRLDYSDRVTVARLLGGQA</sequence>
<proteinExistence type="inferred from homology"/>
<comment type="function">
    <text evidence="1">Catalyzes the addition of meso-diaminopimelic acid to the nucleotide precursor UDP-N-acetylmuramoyl-L-alanyl-D-glutamate (UMAG) in the biosynthesis of bacterial cell-wall peptidoglycan.</text>
</comment>
<comment type="catalytic activity">
    <reaction evidence="1">
        <text>UDP-N-acetyl-alpha-D-muramoyl-L-alanyl-D-glutamate + meso-2,6-diaminopimelate + ATP = UDP-N-acetyl-alpha-D-muramoyl-L-alanyl-gamma-D-glutamyl-meso-2,6-diaminopimelate + ADP + phosphate + H(+)</text>
        <dbReference type="Rhea" id="RHEA:23676"/>
        <dbReference type="ChEBI" id="CHEBI:15378"/>
        <dbReference type="ChEBI" id="CHEBI:30616"/>
        <dbReference type="ChEBI" id="CHEBI:43474"/>
        <dbReference type="ChEBI" id="CHEBI:57791"/>
        <dbReference type="ChEBI" id="CHEBI:83900"/>
        <dbReference type="ChEBI" id="CHEBI:83905"/>
        <dbReference type="ChEBI" id="CHEBI:456216"/>
        <dbReference type="EC" id="6.3.2.13"/>
    </reaction>
</comment>
<comment type="cofactor">
    <cofactor evidence="1">
        <name>Mg(2+)</name>
        <dbReference type="ChEBI" id="CHEBI:18420"/>
    </cofactor>
</comment>
<comment type="pathway">
    <text evidence="1">Cell wall biogenesis; peptidoglycan biosynthesis.</text>
</comment>
<comment type="subcellular location">
    <subcellularLocation>
        <location evidence="1">Cytoplasm</location>
    </subcellularLocation>
</comment>
<comment type="PTM">
    <text evidence="1">Carboxylation is probably crucial for Mg(2+) binding and, consequently, for the gamma-phosphate positioning of ATP.</text>
</comment>
<comment type="similarity">
    <text evidence="1">Belongs to the MurCDEF family. MurE subfamily.</text>
</comment>
<comment type="sequence caution" evidence="2">
    <conflict type="erroneous initiation">
        <sequence resource="EMBL-CDS" id="AAM87179"/>
    </conflict>
</comment>
<comment type="sequence caution" evidence="2">
    <conflict type="erroneous initiation">
        <sequence resource="EMBL-CDS" id="AAS63782"/>
    </conflict>
</comment>